<feature type="chain" id="PRO_1000098754" description="Glycerol kinase">
    <location>
        <begin position="1"/>
        <end position="502"/>
    </location>
</feature>
<feature type="binding site" evidence="1">
    <location>
        <position position="14"/>
    </location>
    <ligand>
        <name>ADP</name>
        <dbReference type="ChEBI" id="CHEBI:456216"/>
    </ligand>
</feature>
<feature type="binding site" evidence="1">
    <location>
        <position position="14"/>
    </location>
    <ligand>
        <name>ATP</name>
        <dbReference type="ChEBI" id="CHEBI:30616"/>
    </ligand>
</feature>
<feature type="binding site" evidence="1">
    <location>
        <position position="14"/>
    </location>
    <ligand>
        <name>sn-glycerol 3-phosphate</name>
        <dbReference type="ChEBI" id="CHEBI:57597"/>
    </ligand>
</feature>
<feature type="binding site" evidence="1">
    <location>
        <position position="15"/>
    </location>
    <ligand>
        <name>ATP</name>
        <dbReference type="ChEBI" id="CHEBI:30616"/>
    </ligand>
</feature>
<feature type="binding site" evidence="1">
    <location>
        <position position="16"/>
    </location>
    <ligand>
        <name>ATP</name>
        <dbReference type="ChEBI" id="CHEBI:30616"/>
    </ligand>
</feature>
<feature type="binding site" evidence="1">
    <location>
        <position position="18"/>
    </location>
    <ligand>
        <name>ADP</name>
        <dbReference type="ChEBI" id="CHEBI:456216"/>
    </ligand>
</feature>
<feature type="binding site" evidence="1">
    <location>
        <position position="84"/>
    </location>
    <ligand>
        <name>glycerol</name>
        <dbReference type="ChEBI" id="CHEBI:17754"/>
    </ligand>
</feature>
<feature type="binding site" evidence="1">
    <location>
        <position position="84"/>
    </location>
    <ligand>
        <name>sn-glycerol 3-phosphate</name>
        <dbReference type="ChEBI" id="CHEBI:57597"/>
    </ligand>
</feature>
<feature type="binding site" evidence="1">
    <location>
        <position position="85"/>
    </location>
    <ligand>
        <name>glycerol</name>
        <dbReference type="ChEBI" id="CHEBI:17754"/>
    </ligand>
</feature>
<feature type="binding site" evidence="1">
    <location>
        <position position="85"/>
    </location>
    <ligand>
        <name>sn-glycerol 3-phosphate</name>
        <dbReference type="ChEBI" id="CHEBI:57597"/>
    </ligand>
</feature>
<feature type="binding site" evidence="1">
    <location>
        <position position="136"/>
    </location>
    <ligand>
        <name>glycerol</name>
        <dbReference type="ChEBI" id="CHEBI:17754"/>
    </ligand>
</feature>
<feature type="binding site" evidence="1">
    <location>
        <position position="136"/>
    </location>
    <ligand>
        <name>sn-glycerol 3-phosphate</name>
        <dbReference type="ChEBI" id="CHEBI:57597"/>
    </ligand>
</feature>
<feature type="binding site" evidence="1">
    <location>
        <position position="246"/>
    </location>
    <ligand>
        <name>glycerol</name>
        <dbReference type="ChEBI" id="CHEBI:17754"/>
    </ligand>
</feature>
<feature type="binding site" evidence="1">
    <location>
        <position position="246"/>
    </location>
    <ligand>
        <name>sn-glycerol 3-phosphate</name>
        <dbReference type="ChEBI" id="CHEBI:57597"/>
    </ligand>
</feature>
<feature type="binding site" evidence="1">
    <location>
        <position position="247"/>
    </location>
    <ligand>
        <name>glycerol</name>
        <dbReference type="ChEBI" id="CHEBI:17754"/>
    </ligand>
</feature>
<feature type="binding site" evidence="1">
    <location>
        <position position="268"/>
    </location>
    <ligand>
        <name>ADP</name>
        <dbReference type="ChEBI" id="CHEBI:456216"/>
    </ligand>
</feature>
<feature type="binding site" evidence="1">
    <location>
        <position position="268"/>
    </location>
    <ligand>
        <name>ATP</name>
        <dbReference type="ChEBI" id="CHEBI:30616"/>
    </ligand>
</feature>
<feature type="binding site" evidence="1">
    <location>
        <position position="311"/>
    </location>
    <ligand>
        <name>ADP</name>
        <dbReference type="ChEBI" id="CHEBI:456216"/>
    </ligand>
</feature>
<feature type="binding site" evidence="1">
    <location>
        <position position="311"/>
    </location>
    <ligand>
        <name>ATP</name>
        <dbReference type="ChEBI" id="CHEBI:30616"/>
    </ligand>
</feature>
<feature type="binding site" evidence="1">
    <location>
        <position position="315"/>
    </location>
    <ligand>
        <name>ATP</name>
        <dbReference type="ChEBI" id="CHEBI:30616"/>
    </ligand>
</feature>
<feature type="binding site" evidence="1">
    <location>
        <position position="412"/>
    </location>
    <ligand>
        <name>ADP</name>
        <dbReference type="ChEBI" id="CHEBI:456216"/>
    </ligand>
</feature>
<feature type="binding site" evidence="1">
    <location>
        <position position="412"/>
    </location>
    <ligand>
        <name>ATP</name>
        <dbReference type="ChEBI" id="CHEBI:30616"/>
    </ligand>
</feature>
<feature type="binding site" evidence="1">
    <location>
        <position position="416"/>
    </location>
    <ligand>
        <name>ADP</name>
        <dbReference type="ChEBI" id="CHEBI:456216"/>
    </ligand>
</feature>
<keyword id="KW-0021">Allosteric enzyme</keyword>
<keyword id="KW-0067">ATP-binding</keyword>
<keyword id="KW-0319">Glycerol metabolism</keyword>
<keyword id="KW-0418">Kinase</keyword>
<keyword id="KW-0479">Metal-binding</keyword>
<keyword id="KW-0547">Nucleotide-binding</keyword>
<keyword id="KW-0808">Transferase</keyword>
<keyword id="KW-0862">Zinc</keyword>
<gene>
    <name evidence="1" type="primary">glpK</name>
    <name type="ordered locus">SeAg_B4332</name>
</gene>
<reference key="1">
    <citation type="journal article" date="2011" name="J. Bacteriol.">
        <title>Comparative genomics of 28 Salmonella enterica isolates: evidence for CRISPR-mediated adaptive sublineage evolution.</title>
        <authorList>
            <person name="Fricke W.F."/>
            <person name="Mammel M.K."/>
            <person name="McDermott P.F."/>
            <person name="Tartera C."/>
            <person name="White D.G."/>
            <person name="Leclerc J.E."/>
            <person name="Ravel J."/>
            <person name="Cebula T.A."/>
        </authorList>
    </citation>
    <scope>NUCLEOTIDE SEQUENCE [LARGE SCALE GENOMIC DNA]</scope>
    <source>
        <strain>SL483</strain>
    </source>
</reference>
<dbReference type="EC" id="2.7.1.30" evidence="1"/>
<dbReference type="EMBL" id="CP001138">
    <property type="protein sequence ID" value="ACH49802.1"/>
    <property type="molecule type" value="Genomic_DNA"/>
</dbReference>
<dbReference type="RefSeq" id="WP_000136808.1">
    <property type="nucleotide sequence ID" value="NC_011149.1"/>
</dbReference>
<dbReference type="SMR" id="B5F0R7"/>
<dbReference type="KEGG" id="sea:SeAg_B4332"/>
<dbReference type="HOGENOM" id="CLU_009281_2_3_6"/>
<dbReference type="UniPathway" id="UPA00618">
    <property type="reaction ID" value="UER00672"/>
</dbReference>
<dbReference type="Proteomes" id="UP000008819">
    <property type="component" value="Chromosome"/>
</dbReference>
<dbReference type="GO" id="GO:0005829">
    <property type="term" value="C:cytosol"/>
    <property type="evidence" value="ECO:0007669"/>
    <property type="project" value="TreeGrafter"/>
</dbReference>
<dbReference type="GO" id="GO:0005524">
    <property type="term" value="F:ATP binding"/>
    <property type="evidence" value="ECO:0007669"/>
    <property type="project" value="UniProtKB-UniRule"/>
</dbReference>
<dbReference type="GO" id="GO:0004370">
    <property type="term" value="F:glycerol kinase activity"/>
    <property type="evidence" value="ECO:0000250"/>
    <property type="project" value="UniProtKB"/>
</dbReference>
<dbReference type="GO" id="GO:0046872">
    <property type="term" value="F:metal ion binding"/>
    <property type="evidence" value="ECO:0007669"/>
    <property type="project" value="UniProtKB-KW"/>
</dbReference>
<dbReference type="GO" id="GO:0019563">
    <property type="term" value="P:glycerol catabolic process"/>
    <property type="evidence" value="ECO:0007669"/>
    <property type="project" value="UniProtKB-UniRule"/>
</dbReference>
<dbReference type="GO" id="GO:0006071">
    <property type="term" value="P:glycerol metabolic process"/>
    <property type="evidence" value="ECO:0000250"/>
    <property type="project" value="UniProtKB"/>
</dbReference>
<dbReference type="GO" id="GO:0006072">
    <property type="term" value="P:glycerol-3-phosphate metabolic process"/>
    <property type="evidence" value="ECO:0007669"/>
    <property type="project" value="InterPro"/>
</dbReference>
<dbReference type="CDD" id="cd07786">
    <property type="entry name" value="FGGY_EcGK_like"/>
    <property type="match status" value="1"/>
</dbReference>
<dbReference type="FunFam" id="3.30.420.40:FF:000007">
    <property type="entry name" value="Glycerol kinase"/>
    <property type="match status" value="1"/>
</dbReference>
<dbReference type="FunFam" id="3.30.420.40:FF:000008">
    <property type="entry name" value="Glycerol kinase"/>
    <property type="match status" value="1"/>
</dbReference>
<dbReference type="Gene3D" id="3.30.420.40">
    <property type="match status" value="2"/>
</dbReference>
<dbReference type="HAMAP" id="MF_00186">
    <property type="entry name" value="Glycerol_kin"/>
    <property type="match status" value="1"/>
</dbReference>
<dbReference type="InterPro" id="IPR043129">
    <property type="entry name" value="ATPase_NBD"/>
</dbReference>
<dbReference type="InterPro" id="IPR000577">
    <property type="entry name" value="Carb_kinase_FGGY"/>
</dbReference>
<dbReference type="InterPro" id="IPR018483">
    <property type="entry name" value="Carb_kinase_FGGY_CS"/>
</dbReference>
<dbReference type="InterPro" id="IPR018485">
    <property type="entry name" value="FGGY_C"/>
</dbReference>
<dbReference type="InterPro" id="IPR018484">
    <property type="entry name" value="FGGY_N"/>
</dbReference>
<dbReference type="InterPro" id="IPR005999">
    <property type="entry name" value="Glycerol_kin"/>
</dbReference>
<dbReference type="NCBIfam" id="TIGR01311">
    <property type="entry name" value="glycerol_kin"/>
    <property type="match status" value="1"/>
</dbReference>
<dbReference type="NCBIfam" id="NF000756">
    <property type="entry name" value="PRK00047.1"/>
    <property type="match status" value="1"/>
</dbReference>
<dbReference type="PANTHER" id="PTHR10196:SF69">
    <property type="entry name" value="GLYCEROL KINASE"/>
    <property type="match status" value="1"/>
</dbReference>
<dbReference type="PANTHER" id="PTHR10196">
    <property type="entry name" value="SUGAR KINASE"/>
    <property type="match status" value="1"/>
</dbReference>
<dbReference type="Pfam" id="PF02782">
    <property type="entry name" value="FGGY_C"/>
    <property type="match status" value="1"/>
</dbReference>
<dbReference type="Pfam" id="PF00370">
    <property type="entry name" value="FGGY_N"/>
    <property type="match status" value="1"/>
</dbReference>
<dbReference type="PIRSF" id="PIRSF000538">
    <property type="entry name" value="GlpK"/>
    <property type="match status" value="1"/>
</dbReference>
<dbReference type="SUPFAM" id="SSF53067">
    <property type="entry name" value="Actin-like ATPase domain"/>
    <property type="match status" value="2"/>
</dbReference>
<dbReference type="PROSITE" id="PS00933">
    <property type="entry name" value="FGGY_KINASES_1"/>
    <property type="match status" value="1"/>
</dbReference>
<dbReference type="PROSITE" id="PS00445">
    <property type="entry name" value="FGGY_KINASES_2"/>
    <property type="match status" value="1"/>
</dbReference>
<protein>
    <recommendedName>
        <fullName evidence="1">Glycerol kinase</fullName>
        <ecNumber evidence="1">2.7.1.30</ecNumber>
    </recommendedName>
    <alternativeName>
        <fullName evidence="1">ATP:glycerol 3-phosphotransferase</fullName>
    </alternativeName>
    <alternativeName>
        <fullName evidence="1">Glycerokinase</fullName>
        <shortName evidence="1">GK</shortName>
    </alternativeName>
</protein>
<evidence type="ECO:0000255" key="1">
    <source>
        <dbReference type="HAMAP-Rule" id="MF_00186"/>
    </source>
</evidence>
<name>GLPK_SALA4</name>
<organism>
    <name type="scientific">Salmonella agona (strain SL483)</name>
    <dbReference type="NCBI Taxonomy" id="454166"/>
    <lineage>
        <taxon>Bacteria</taxon>
        <taxon>Pseudomonadati</taxon>
        <taxon>Pseudomonadota</taxon>
        <taxon>Gammaproteobacteria</taxon>
        <taxon>Enterobacterales</taxon>
        <taxon>Enterobacteriaceae</taxon>
        <taxon>Salmonella</taxon>
    </lineage>
</organism>
<accession>B5F0R7</accession>
<sequence>MTEKKYIVALDQGTTSSRAVVMDHDANIVSVSQREFEQIYPKPGWVEHDPMEIWASQSSTLVEVLAKADISSDQIAAIGITNQRETAIVWERETGKPIYNAIVWQCRRTADICEQLKRDGLEDYIRDNTGLVVDPYFSGTKVKWILDHVEGSRERAKRGELLFGTVDTWLIWKMTQGRVHVTDYTNASRTMLFNIHDLDWDDKMLDVLDIPRAMLPQVRKSSEVYGQTNIGGKGGTRIPIAGIAGDQQAALFGQLCVKEGMAKNTYGTGCFMLMNTGEKAVKSENGLLTTIACGPSGEVNYALEGAVFMAGASIQWLRDEMKLISDAFDSEYFATKVKDTNGVYVVPAFTGLGAPYWDPYARGAIFGLTRGVNSNHIIRATLESIAYQTRDVLEAMQADSGIRLHALRVDGGAVANNFLMQFQSDILGTRVERPEVREVTALGAAYLAGLAVGYWQNLDELQEKAVIEREFRPGIETTERNYRYSGWKKAVKRAMAWEDHDK</sequence>
<comment type="function">
    <text evidence="1">Key enzyme in the regulation of glycerol uptake and metabolism. Catalyzes the phosphorylation of glycerol to yield sn-glycerol 3-phosphate.</text>
</comment>
<comment type="catalytic activity">
    <reaction evidence="1">
        <text>glycerol + ATP = sn-glycerol 3-phosphate + ADP + H(+)</text>
        <dbReference type="Rhea" id="RHEA:21644"/>
        <dbReference type="ChEBI" id="CHEBI:15378"/>
        <dbReference type="ChEBI" id="CHEBI:17754"/>
        <dbReference type="ChEBI" id="CHEBI:30616"/>
        <dbReference type="ChEBI" id="CHEBI:57597"/>
        <dbReference type="ChEBI" id="CHEBI:456216"/>
        <dbReference type="EC" id="2.7.1.30"/>
    </reaction>
</comment>
<comment type="activity regulation">
    <text evidence="1">Activity of this regulatory enzyme is affected by several metabolites. Allosterically and non-competitively inhibited by fructose 1,6-bisphosphate (FBP) and unphosphorylated phosphocarrier protein EIIA-Glc (III-Glc), an integral component of the bacterial phosphotransferase (PTS) system.</text>
</comment>
<comment type="pathway">
    <text evidence="1">Polyol metabolism; glycerol degradation via glycerol kinase pathway; sn-glycerol 3-phosphate from glycerol: step 1/1.</text>
</comment>
<comment type="subunit">
    <text evidence="1">Homotetramer and homodimer (in equilibrium). Heterodimer with EIIA-Glc. Binds 1 zinc ion per glycerol kinase EIIA-Glc dimer. The zinc ion is important for dimerization.</text>
</comment>
<comment type="similarity">
    <text evidence="1">Belongs to the FGGY kinase family.</text>
</comment>
<proteinExistence type="inferred from homology"/>